<proteinExistence type="evidence at protein level"/>
<evidence type="ECO:0000269" key="1">
    <source>
    </source>
</evidence>
<evidence type="ECO:0000269" key="2">
    <source>
    </source>
</evidence>
<evidence type="ECO:0000269" key="3">
    <source>
    </source>
</evidence>
<evidence type="ECO:0000303" key="4">
    <source>
    </source>
</evidence>
<evidence type="ECO:0000303" key="5">
    <source>
    </source>
</evidence>
<evidence type="ECO:0000305" key="6"/>
<evidence type="ECO:0000312" key="7">
    <source>
        <dbReference type="HGNC" id="HGNC:26854"/>
    </source>
</evidence>
<accession>Q3ZCV2</accession>
<accession>B7WPL2</accession>
<accession>Q8N7Y9</accession>
<dbReference type="EMBL" id="AK097520">
    <property type="protein sequence ID" value="BAC05087.1"/>
    <property type="molecule type" value="mRNA"/>
</dbReference>
<dbReference type="EMBL" id="AC096536">
    <property type="status" value="NOT_ANNOTATED_CDS"/>
    <property type="molecule type" value="Genomic_DNA"/>
</dbReference>
<dbReference type="EMBL" id="KF495955">
    <property type="status" value="NOT_ANNOTATED_CDS"/>
    <property type="molecule type" value="Genomic_DNA"/>
</dbReference>
<dbReference type="EMBL" id="BC039109">
    <property type="protein sequence ID" value="AAH39109.1"/>
    <property type="molecule type" value="mRNA"/>
</dbReference>
<dbReference type="EMBL" id="BC064142">
    <property type="protein sequence ID" value="AAH64142.1"/>
    <property type="molecule type" value="mRNA"/>
</dbReference>
<dbReference type="CCDS" id="CCDS44153.1">
    <molecule id="Q3ZCV2-1"/>
</dbReference>
<dbReference type="CCDS" id="CCDS599.1">
    <molecule id="Q3ZCV2-2"/>
</dbReference>
<dbReference type="RefSeq" id="NP_001104003.1">
    <molecule id="Q3ZCV2-1"/>
    <property type="nucleotide sequence ID" value="NM_001110533.2"/>
</dbReference>
<dbReference type="RefSeq" id="NP_689820.2">
    <molecule id="Q3ZCV2-2"/>
    <property type="nucleotide sequence ID" value="NM_152607.3"/>
</dbReference>
<dbReference type="BioGRID" id="127877">
    <property type="interactions" value="2"/>
</dbReference>
<dbReference type="FunCoup" id="Q3ZCV2">
    <property type="interactions" value="13"/>
</dbReference>
<dbReference type="IntAct" id="Q3ZCV2">
    <property type="interactions" value="2"/>
</dbReference>
<dbReference type="STRING" id="9606.ENSP00000360320"/>
<dbReference type="iPTMnet" id="Q3ZCV2"/>
<dbReference type="PhosphoSitePlus" id="Q3ZCV2"/>
<dbReference type="BioMuta" id="LEXM"/>
<dbReference type="DMDM" id="223590240"/>
<dbReference type="jPOST" id="Q3ZCV2"/>
<dbReference type="MassIVE" id="Q3ZCV2"/>
<dbReference type="PaxDb" id="9606-ENSP00000360320"/>
<dbReference type="PeptideAtlas" id="Q3ZCV2"/>
<dbReference type="ProteomicsDB" id="61917">
    <molecule id="Q3ZCV2-1"/>
</dbReference>
<dbReference type="ProteomicsDB" id="61918">
    <molecule id="Q3ZCV2-2"/>
</dbReference>
<dbReference type="Antibodypedia" id="49963">
    <property type="antibodies" value="128 antibodies from 20 providers"/>
</dbReference>
<dbReference type="DNASU" id="163747"/>
<dbReference type="Ensembl" id="ENST00000358193.7">
    <molecule id="Q3ZCV2-2"/>
    <property type="protein sequence ID" value="ENSP00000350924.3"/>
    <property type="gene ID" value="ENSG00000162398.12"/>
</dbReference>
<dbReference type="Ensembl" id="ENST00000371273.4">
    <molecule id="Q3ZCV2-1"/>
    <property type="protein sequence ID" value="ENSP00000360320.3"/>
    <property type="gene ID" value="ENSG00000162398.12"/>
</dbReference>
<dbReference type="GeneID" id="163747"/>
<dbReference type="KEGG" id="hsa:163747"/>
<dbReference type="MANE-Select" id="ENST00000371273.4">
    <property type="protein sequence ID" value="ENSP00000360320.3"/>
    <property type="RefSeq nucleotide sequence ID" value="NM_001110533.2"/>
    <property type="RefSeq protein sequence ID" value="NP_001104003.1"/>
</dbReference>
<dbReference type="UCSC" id="uc001cya.5">
    <molecule id="Q3ZCV2-1"/>
    <property type="organism name" value="human"/>
</dbReference>
<dbReference type="AGR" id="HGNC:26854"/>
<dbReference type="CTD" id="163747"/>
<dbReference type="DisGeNET" id="163747"/>
<dbReference type="GeneCards" id="CIMAP2"/>
<dbReference type="HGNC" id="HGNC:26854">
    <property type="gene designation" value="CIMAP2"/>
</dbReference>
<dbReference type="HPA" id="ENSG00000162398">
    <property type="expression patterns" value="Group enriched (esophagus, testis, vagina)"/>
</dbReference>
<dbReference type="MIM" id="616446">
    <property type="type" value="gene"/>
</dbReference>
<dbReference type="neXtProt" id="NX_Q3ZCV2"/>
<dbReference type="OpenTargets" id="ENSG00000162398"/>
<dbReference type="PharmGKB" id="PA142672425"/>
<dbReference type="VEuPathDB" id="HostDB:ENSG00000162398"/>
<dbReference type="eggNOG" id="KOG4087">
    <property type="taxonomic scope" value="Eukaryota"/>
</dbReference>
<dbReference type="GeneTree" id="ENSGT00390000015471"/>
<dbReference type="HOGENOM" id="CLU_053450_0_0_1"/>
<dbReference type="InParanoid" id="Q3ZCV2"/>
<dbReference type="OMA" id="SSQMIMG"/>
<dbReference type="PAN-GO" id="Q3ZCV2">
    <property type="GO annotations" value="0 GO annotations based on evolutionary models"/>
</dbReference>
<dbReference type="PhylomeDB" id="Q3ZCV2"/>
<dbReference type="TreeFam" id="TF329164"/>
<dbReference type="PathwayCommons" id="Q3ZCV2"/>
<dbReference type="BioGRID-ORCS" id="163747">
    <property type="hits" value="18 hits in 1111 CRISPR screens"/>
</dbReference>
<dbReference type="ChiTaRS" id="LEXM">
    <property type="organism name" value="human"/>
</dbReference>
<dbReference type="GenomeRNAi" id="163747"/>
<dbReference type="Pharos" id="Q3ZCV2">
    <property type="development level" value="Tbio"/>
</dbReference>
<dbReference type="PRO" id="PR:Q3ZCV2"/>
<dbReference type="Proteomes" id="UP000005640">
    <property type="component" value="Chromosome 1"/>
</dbReference>
<dbReference type="RNAct" id="Q3ZCV2">
    <property type="molecule type" value="protein"/>
</dbReference>
<dbReference type="Bgee" id="ENSG00000162398">
    <property type="expression patterns" value="Expressed in esophagus squamous epithelium and 50 other cell types or tissues"/>
</dbReference>
<dbReference type="InterPro" id="IPR033557">
    <property type="entry name" value="CIMAP2"/>
</dbReference>
<dbReference type="PANTHER" id="PTHR34914">
    <property type="entry name" value="LYMPHOCYTE EXPANSION MOLECULE"/>
    <property type="match status" value="1"/>
</dbReference>
<dbReference type="PANTHER" id="PTHR34914:SF1">
    <property type="entry name" value="LYMPHOCYTE EXPANSION MOLECULE"/>
    <property type="match status" value="1"/>
</dbReference>
<keyword id="KW-0025">Alternative splicing</keyword>
<keyword id="KW-1267">Proteomics identification</keyword>
<keyword id="KW-1185">Reference proteome</keyword>
<protein>
    <recommendedName>
        <fullName evidence="7">Ciliary microtubule-associated protein 2</fullName>
    </recommendedName>
    <alternativeName>
        <fullName evidence="5">Lymphocyte expansion molecule</fullName>
    </alternativeName>
</protein>
<name>CMAP2_HUMAN</name>
<organism>
    <name type="scientific">Homo sapiens</name>
    <name type="common">Human</name>
    <dbReference type="NCBI Taxonomy" id="9606"/>
    <lineage>
        <taxon>Eukaryota</taxon>
        <taxon>Metazoa</taxon>
        <taxon>Chordata</taxon>
        <taxon>Craniata</taxon>
        <taxon>Vertebrata</taxon>
        <taxon>Euteleostomi</taxon>
        <taxon>Mammalia</taxon>
        <taxon>Eutheria</taxon>
        <taxon>Euarchontoglires</taxon>
        <taxon>Primates</taxon>
        <taxon>Haplorrhini</taxon>
        <taxon>Catarrhini</taxon>
        <taxon>Hominidae</taxon>
        <taxon>Homo</taxon>
    </lineage>
</organism>
<comment type="alternative products">
    <event type="alternative splicing"/>
    <isoform>
        <id>Q3ZCV2-1</id>
        <name>1</name>
        <sequence type="displayed"/>
    </isoform>
    <isoform>
        <id>Q3ZCV2-2</id>
        <name>2</name>
        <sequence type="described" ref="VSP_027294"/>
    </isoform>
</comment>
<comment type="tissue specificity">
    <text evidence="3">Sperm.</text>
</comment>
<comment type="caution">
    <text>Was reported to promote CD8+ T cell immunity through effects on mitochondrial respiration (PubMed:25883318). However, the corresponding article has been retracted (PubMed:27980177).</text>
</comment>
<reference key="1">
    <citation type="journal article" date="2004" name="Nat. Genet.">
        <title>Complete sequencing and characterization of 21,243 full-length human cDNAs.</title>
        <authorList>
            <person name="Ota T."/>
            <person name="Suzuki Y."/>
            <person name="Nishikawa T."/>
            <person name="Otsuki T."/>
            <person name="Sugiyama T."/>
            <person name="Irie R."/>
            <person name="Wakamatsu A."/>
            <person name="Hayashi K."/>
            <person name="Sato H."/>
            <person name="Nagai K."/>
            <person name="Kimura K."/>
            <person name="Makita H."/>
            <person name="Sekine M."/>
            <person name="Obayashi M."/>
            <person name="Nishi T."/>
            <person name="Shibahara T."/>
            <person name="Tanaka T."/>
            <person name="Ishii S."/>
            <person name="Yamamoto J."/>
            <person name="Saito K."/>
            <person name="Kawai Y."/>
            <person name="Isono Y."/>
            <person name="Nakamura Y."/>
            <person name="Nagahari K."/>
            <person name="Murakami K."/>
            <person name="Yasuda T."/>
            <person name="Iwayanagi T."/>
            <person name="Wagatsuma M."/>
            <person name="Shiratori A."/>
            <person name="Sudo H."/>
            <person name="Hosoiri T."/>
            <person name="Kaku Y."/>
            <person name="Kodaira H."/>
            <person name="Kondo H."/>
            <person name="Sugawara M."/>
            <person name="Takahashi M."/>
            <person name="Kanda K."/>
            <person name="Yokoi T."/>
            <person name="Furuya T."/>
            <person name="Kikkawa E."/>
            <person name="Omura Y."/>
            <person name="Abe K."/>
            <person name="Kamihara K."/>
            <person name="Katsuta N."/>
            <person name="Sato K."/>
            <person name="Tanikawa M."/>
            <person name="Yamazaki M."/>
            <person name="Ninomiya K."/>
            <person name="Ishibashi T."/>
            <person name="Yamashita H."/>
            <person name="Murakawa K."/>
            <person name="Fujimori K."/>
            <person name="Tanai H."/>
            <person name="Kimata M."/>
            <person name="Watanabe M."/>
            <person name="Hiraoka S."/>
            <person name="Chiba Y."/>
            <person name="Ishida S."/>
            <person name="Ono Y."/>
            <person name="Takiguchi S."/>
            <person name="Watanabe S."/>
            <person name="Yosida M."/>
            <person name="Hotuta T."/>
            <person name="Kusano J."/>
            <person name="Kanehori K."/>
            <person name="Takahashi-Fujii A."/>
            <person name="Hara H."/>
            <person name="Tanase T.-O."/>
            <person name="Nomura Y."/>
            <person name="Togiya S."/>
            <person name="Komai F."/>
            <person name="Hara R."/>
            <person name="Takeuchi K."/>
            <person name="Arita M."/>
            <person name="Imose N."/>
            <person name="Musashino K."/>
            <person name="Yuuki H."/>
            <person name="Oshima A."/>
            <person name="Sasaki N."/>
            <person name="Aotsuka S."/>
            <person name="Yoshikawa Y."/>
            <person name="Matsunawa H."/>
            <person name="Ichihara T."/>
            <person name="Shiohata N."/>
            <person name="Sano S."/>
            <person name="Moriya S."/>
            <person name="Momiyama H."/>
            <person name="Satoh N."/>
            <person name="Takami S."/>
            <person name="Terashima Y."/>
            <person name="Suzuki O."/>
            <person name="Nakagawa S."/>
            <person name="Senoh A."/>
            <person name="Mizoguchi H."/>
            <person name="Goto Y."/>
            <person name="Shimizu F."/>
            <person name="Wakebe H."/>
            <person name="Hishigaki H."/>
            <person name="Watanabe T."/>
            <person name="Sugiyama A."/>
            <person name="Takemoto M."/>
            <person name="Kawakami B."/>
            <person name="Yamazaki M."/>
            <person name="Watanabe K."/>
            <person name="Kumagai A."/>
            <person name="Itakura S."/>
            <person name="Fukuzumi Y."/>
            <person name="Fujimori Y."/>
            <person name="Komiyama M."/>
            <person name="Tashiro H."/>
            <person name="Tanigami A."/>
            <person name="Fujiwara T."/>
            <person name="Ono T."/>
            <person name="Yamada K."/>
            <person name="Fujii Y."/>
            <person name="Ozaki K."/>
            <person name="Hirao M."/>
            <person name="Ohmori Y."/>
            <person name="Kawabata A."/>
            <person name="Hikiji T."/>
            <person name="Kobatake N."/>
            <person name="Inagaki H."/>
            <person name="Ikema Y."/>
            <person name="Okamoto S."/>
            <person name="Okitani R."/>
            <person name="Kawakami T."/>
            <person name="Noguchi S."/>
            <person name="Itoh T."/>
            <person name="Shigeta K."/>
            <person name="Senba T."/>
            <person name="Matsumura K."/>
            <person name="Nakajima Y."/>
            <person name="Mizuno T."/>
            <person name="Morinaga M."/>
            <person name="Sasaki M."/>
            <person name="Togashi T."/>
            <person name="Oyama M."/>
            <person name="Hata H."/>
            <person name="Watanabe M."/>
            <person name="Komatsu T."/>
            <person name="Mizushima-Sugano J."/>
            <person name="Satoh T."/>
            <person name="Shirai Y."/>
            <person name="Takahashi Y."/>
            <person name="Nakagawa K."/>
            <person name="Okumura K."/>
            <person name="Nagase T."/>
            <person name="Nomura N."/>
            <person name="Kikuchi H."/>
            <person name="Masuho Y."/>
            <person name="Yamashita R."/>
            <person name="Nakai K."/>
            <person name="Yada T."/>
            <person name="Nakamura Y."/>
            <person name="Ohara O."/>
            <person name="Isogai T."/>
            <person name="Sugano S."/>
        </authorList>
    </citation>
    <scope>NUCLEOTIDE SEQUENCE [LARGE SCALE MRNA] (ISOFORM 1)</scope>
    <scope>VARIANT CYS-126</scope>
    <source>
        <tissue>Testis</tissue>
    </source>
</reference>
<reference key="2">
    <citation type="journal article" date="2006" name="Nature">
        <title>The DNA sequence and biological annotation of human chromosome 1.</title>
        <authorList>
            <person name="Gregory S.G."/>
            <person name="Barlow K.F."/>
            <person name="McLay K.E."/>
            <person name="Kaul R."/>
            <person name="Swarbreck D."/>
            <person name="Dunham A."/>
            <person name="Scott C.E."/>
            <person name="Howe K.L."/>
            <person name="Woodfine K."/>
            <person name="Spencer C.C.A."/>
            <person name="Jones M.C."/>
            <person name="Gillson C."/>
            <person name="Searle S."/>
            <person name="Zhou Y."/>
            <person name="Kokocinski F."/>
            <person name="McDonald L."/>
            <person name="Evans R."/>
            <person name="Phillips K."/>
            <person name="Atkinson A."/>
            <person name="Cooper R."/>
            <person name="Jones C."/>
            <person name="Hall R.E."/>
            <person name="Andrews T.D."/>
            <person name="Lloyd C."/>
            <person name="Ainscough R."/>
            <person name="Almeida J.P."/>
            <person name="Ambrose K.D."/>
            <person name="Anderson F."/>
            <person name="Andrew R.W."/>
            <person name="Ashwell R.I.S."/>
            <person name="Aubin K."/>
            <person name="Babbage A.K."/>
            <person name="Bagguley C.L."/>
            <person name="Bailey J."/>
            <person name="Beasley H."/>
            <person name="Bethel G."/>
            <person name="Bird C.P."/>
            <person name="Bray-Allen S."/>
            <person name="Brown J.Y."/>
            <person name="Brown A.J."/>
            <person name="Buckley D."/>
            <person name="Burton J."/>
            <person name="Bye J."/>
            <person name="Carder C."/>
            <person name="Chapman J.C."/>
            <person name="Clark S.Y."/>
            <person name="Clarke G."/>
            <person name="Clee C."/>
            <person name="Cobley V."/>
            <person name="Collier R.E."/>
            <person name="Corby N."/>
            <person name="Coville G.J."/>
            <person name="Davies J."/>
            <person name="Deadman R."/>
            <person name="Dunn M."/>
            <person name="Earthrowl M."/>
            <person name="Ellington A.G."/>
            <person name="Errington H."/>
            <person name="Frankish A."/>
            <person name="Frankland J."/>
            <person name="French L."/>
            <person name="Garner P."/>
            <person name="Garnett J."/>
            <person name="Gay L."/>
            <person name="Ghori M.R.J."/>
            <person name="Gibson R."/>
            <person name="Gilby L.M."/>
            <person name="Gillett W."/>
            <person name="Glithero R.J."/>
            <person name="Grafham D.V."/>
            <person name="Griffiths C."/>
            <person name="Griffiths-Jones S."/>
            <person name="Grocock R."/>
            <person name="Hammond S."/>
            <person name="Harrison E.S.I."/>
            <person name="Hart E."/>
            <person name="Haugen E."/>
            <person name="Heath P.D."/>
            <person name="Holmes S."/>
            <person name="Holt K."/>
            <person name="Howden P.J."/>
            <person name="Hunt A.R."/>
            <person name="Hunt S.E."/>
            <person name="Hunter G."/>
            <person name="Isherwood J."/>
            <person name="James R."/>
            <person name="Johnson C."/>
            <person name="Johnson D."/>
            <person name="Joy A."/>
            <person name="Kay M."/>
            <person name="Kershaw J.K."/>
            <person name="Kibukawa M."/>
            <person name="Kimberley A.M."/>
            <person name="King A."/>
            <person name="Knights A.J."/>
            <person name="Lad H."/>
            <person name="Laird G."/>
            <person name="Lawlor S."/>
            <person name="Leongamornlert D.A."/>
            <person name="Lloyd D.M."/>
            <person name="Loveland J."/>
            <person name="Lovell J."/>
            <person name="Lush M.J."/>
            <person name="Lyne R."/>
            <person name="Martin S."/>
            <person name="Mashreghi-Mohammadi M."/>
            <person name="Matthews L."/>
            <person name="Matthews N.S.W."/>
            <person name="McLaren S."/>
            <person name="Milne S."/>
            <person name="Mistry S."/>
            <person name="Moore M.J.F."/>
            <person name="Nickerson T."/>
            <person name="O'Dell C.N."/>
            <person name="Oliver K."/>
            <person name="Palmeiri A."/>
            <person name="Palmer S.A."/>
            <person name="Parker A."/>
            <person name="Patel D."/>
            <person name="Pearce A.V."/>
            <person name="Peck A.I."/>
            <person name="Pelan S."/>
            <person name="Phelps K."/>
            <person name="Phillimore B.J."/>
            <person name="Plumb R."/>
            <person name="Rajan J."/>
            <person name="Raymond C."/>
            <person name="Rouse G."/>
            <person name="Saenphimmachak C."/>
            <person name="Sehra H.K."/>
            <person name="Sheridan E."/>
            <person name="Shownkeen R."/>
            <person name="Sims S."/>
            <person name="Skuce C.D."/>
            <person name="Smith M."/>
            <person name="Steward C."/>
            <person name="Subramanian S."/>
            <person name="Sycamore N."/>
            <person name="Tracey A."/>
            <person name="Tromans A."/>
            <person name="Van Helmond Z."/>
            <person name="Wall M."/>
            <person name="Wallis J.M."/>
            <person name="White S."/>
            <person name="Whitehead S.L."/>
            <person name="Wilkinson J.E."/>
            <person name="Willey D.L."/>
            <person name="Williams H."/>
            <person name="Wilming L."/>
            <person name="Wray P.W."/>
            <person name="Wu Z."/>
            <person name="Coulson A."/>
            <person name="Vaudin M."/>
            <person name="Sulston J.E."/>
            <person name="Durbin R.M."/>
            <person name="Hubbard T."/>
            <person name="Wooster R."/>
            <person name="Dunham I."/>
            <person name="Carter N.P."/>
            <person name="McVean G."/>
            <person name="Ross M.T."/>
            <person name="Harrow J."/>
            <person name="Olson M.V."/>
            <person name="Beck S."/>
            <person name="Rogers J."/>
            <person name="Bentley D.R."/>
        </authorList>
    </citation>
    <scope>NUCLEOTIDE SEQUENCE [LARGE SCALE GENOMIC DNA]</scope>
</reference>
<reference key="3">
    <citation type="journal article" date="2004" name="Genome Res.">
        <title>The status, quality, and expansion of the NIH full-length cDNA project: the Mammalian Gene Collection (MGC).</title>
        <authorList>
            <consortium name="The MGC Project Team"/>
        </authorList>
    </citation>
    <scope>NUCLEOTIDE SEQUENCE [LARGE SCALE MRNA] (ISOFORMS 1 AND 2)</scope>
    <scope>VARIANT CYS-126</scope>
    <source>
        <tissue>Testis</tissue>
    </source>
</reference>
<reference key="4">
    <citation type="journal article" date="2015" name="Science">
        <title>T cell metabolism. The protein LEM promotes CD8+ T cell immunity through effects on mitochondrial respiration.</title>
        <authorList>
            <person name="Okoye I."/>
            <person name="Wang L."/>
            <person name="Pallmer K."/>
            <person name="Richter K."/>
            <person name="Ichimura T."/>
            <person name="Haas R."/>
            <person name="Crouse J."/>
            <person name="Choi O."/>
            <person name="Heathcote D."/>
            <person name="Lovo E."/>
            <person name="Mauro C."/>
            <person name="Abdi R."/>
            <person name="Oxenius A."/>
            <person name="Rutschmann S."/>
            <person name="Ashton-Rickardt P.G."/>
        </authorList>
    </citation>
    <scope>RETRACTED PAPER</scope>
</reference>
<reference key="5">
    <citation type="journal article" date="2016" name="Science">
        <authorList>
            <person name="Sills J."/>
            <person name="Berg J."/>
        </authorList>
    </citation>
    <scope>RETRACTION NOTICE OF PUBMED:25883318</scope>
</reference>
<reference key="6">
    <citation type="journal article" date="2016" name="J. Proteome Res.">
        <title>Looking for Missing Proteins in the Proteome of Human Spermatozoa: An Update.</title>
        <authorList>
            <person name="Vandenbrouck Y."/>
            <person name="Lane L."/>
            <person name="Carapito C."/>
            <person name="Duek P."/>
            <person name="Rondel K."/>
            <person name="Bruley C."/>
            <person name="Macron C."/>
            <person name="Gonzalez de Peredo A."/>
            <person name="Coute Y."/>
            <person name="Chaoui K."/>
            <person name="Com E."/>
            <person name="Gateau A."/>
            <person name="Hesse A.M."/>
            <person name="Marcellin M."/>
            <person name="Mear L."/>
            <person name="Mouton-Barbosa E."/>
            <person name="Robin T."/>
            <person name="Burlet-Schiltz O."/>
            <person name="Cianferani S."/>
            <person name="Ferro M."/>
            <person name="Freour T."/>
            <person name="Lindskog C."/>
            <person name="Garin J."/>
            <person name="Pineau C."/>
        </authorList>
    </citation>
    <scope>TISSUE SPECIFICITY</scope>
</reference>
<sequence>MRESQDAAGAHGWNRVGSTATKWFTGAPFGVQSHRFDISAVYPNWKKFSTFTEAPYSTRYSTQVSHIGPGTYSSKETCFSKKKLMKEVDTGWAKAQEATRLTQLPHFQYQAIMKEKRLKEQKLGPGSYNLKDFLEQLREKPCSTRGLLSSGEVRFRGLTGNYYPGPGNYGEKGNPYTKLEENAWNRSHSEGLMCRMSNKPHPRPHQGSGLGPGTYFFKSDLETYVARSVGTRGPYDTFSGDRSKPLPYGHYSMQKKKPRELMNFKSFVEELNSHHNKKHGVFSKLPRNPKTPTERIYWANLSQCPRTLATSGPSFWLPQEKKCKPVNQPPFLLTSKGSGAKACQMIMGSWNPVGVGRYLNTWLMETKDRRQRYRSLFLSGSKRYLSDLARDMLMQERITPFTKGKCPPTVDYNSDPTP</sequence>
<feature type="chain" id="PRO_0000297585" description="Ciliary microtubule-associated protein 2">
    <location>
        <begin position="1"/>
        <end position="418"/>
    </location>
</feature>
<feature type="splice variant" id="VSP_027294" description="In isoform 2." evidence="4">
    <original>ERITPFTKGKCPPTVDYNSDPTP</original>
    <variation>IRLFCWKGLEVINFGLSPM</variation>
    <location>
        <begin position="396"/>
        <end position="418"/>
    </location>
</feature>
<feature type="sequence variant" id="VAR_034645" description="In dbSNP:rs9782980." evidence="1 2">
    <original>G</original>
    <variation>C</variation>
    <location>
        <position position="126"/>
    </location>
</feature>
<feature type="sequence variant" id="VAR_054410" description="In dbSNP:rs600499.">
    <original>H</original>
    <variation>Y</variation>
    <location>
        <position position="205"/>
    </location>
</feature>
<feature type="sequence conflict" description="In Ref. 3; AAH39109." evidence="6" ref="3">
    <original>K</original>
    <variation>R</variation>
    <location>
        <position position="122"/>
    </location>
</feature>
<gene>
    <name evidence="7" type="primary">CIMAP2</name>
    <name evidence="5" type="synonym">LEM</name>
    <name type="synonym">LEXM</name>
    <name type="ORF">C1orf177</name>
</gene>